<evidence type="ECO:0000255" key="1">
    <source>
        <dbReference type="HAMAP-Rule" id="MF_00073"/>
    </source>
</evidence>
<gene>
    <name evidence="1" type="primary">nusB</name>
    <name type="ordered locus">Bcep1808_0872</name>
</gene>
<name>NUSB_BURVG</name>
<dbReference type="EMBL" id="CP000614">
    <property type="protein sequence ID" value="ABO53884.1"/>
    <property type="molecule type" value="Genomic_DNA"/>
</dbReference>
<dbReference type="SMR" id="A4JC81"/>
<dbReference type="KEGG" id="bvi:Bcep1808_0872"/>
<dbReference type="eggNOG" id="COG0781">
    <property type="taxonomic scope" value="Bacteria"/>
</dbReference>
<dbReference type="HOGENOM" id="CLU_087843_4_1_4"/>
<dbReference type="Proteomes" id="UP000002287">
    <property type="component" value="Chromosome 1"/>
</dbReference>
<dbReference type="GO" id="GO:0005829">
    <property type="term" value="C:cytosol"/>
    <property type="evidence" value="ECO:0007669"/>
    <property type="project" value="TreeGrafter"/>
</dbReference>
<dbReference type="GO" id="GO:0003723">
    <property type="term" value="F:RNA binding"/>
    <property type="evidence" value="ECO:0007669"/>
    <property type="project" value="UniProtKB-UniRule"/>
</dbReference>
<dbReference type="GO" id="GO:0006353">
    <property type="term" value="P:DNA-templated transcription termination"/>
    <property type="evidence" value="ECO:0007669"/>
    <property type="project" value="UniProtKB-UniRule"/>
</dbReference>
<dbReference type="GO" id="GO:0031564">
    <property type="term" value="P:transcription antitermination"/>
    <property type="evidence" value="ECO:0007669"/>
    <property type="project" value="UniProtKB-KW"/>
</dbReference>
<dbReference type="Gene3D" id="1.10.940.10">
    <property type="entry name" value="NusB-like"/>
    <property type="match status" value="1"/>
</dbReference>
<dbReference type="HAMAP" id="MF_00073">
    <property type="entry name" value="NusB"/>
    <property type="match status" value="1"/>
</dbReference>
<dbReference type="InterPro" id="IPR035926">
    <property type="entry name" value="NusB-like_sf"/>
</dbReference>
<dbReference type="InterPro" id="IPR011605">
    <property type="entry name" value="NusB_fam"/>
</dbReference>
<dbReference type="InterPro" id="IPR006027">
    <property type="entry name" value="NusB_RsmB_TIM44"/>
</dbReference>
<dbReference type="NCBIfam" id="TIGR01951">
    <property type="entry name" value="nusB"/>
    <property type="match status" value="1"/>
</dbReference>
<dbReference type="PANTHER" id="PTHR11078:SF3">
    <property type="entry name" value="ANTITERMINATION NUSB DOMAIN-CONTAINING PROTEIN"/>
    <property type="match status" value="1"/>
</dbReference>
<dbReference type="PANTHER" id="PTHR11078">
    <property type="entry name" value="N UTILIZATION SUBSTANCE PROTEIN B-RELATED"/>
    <property type="match status" value="1"/>
</dbReference>
<dbReference type="Pfam" id="PF01029">
    <property type="entry name" value="NusB"/>
    <property type="match status" value="1"/>
</dbReference>
<dbReference type="SUPFAM" id="SSF48013">
    <property type="entry name" value="NusB-like"/>
    <property type="match status" value="1"/>
</dbReference>
<sequence length="145" mass="16095">MKKSARRQSRELATQGLYQWLLSNASSGEIDAQLRGALGYDKADKELLEAILHGVIREHATLVEAITPSLDRPIDQLSPVERAVLLIATFELTHHVETPYRVIINEAVELTKTFGGSDGYKYVNGVLDKLAAKLRPAETQARRNS</sequence>
<accession>A4JC81</accession>
<organism>
    <name type="scientific">Burkholderia vietnamiensis (strain G4 / LMG 22486)</name>
    <name type="common">Burkholderia cepacia (strain R1808)</name>
    <dbReference type="NCBI Taxonomy" id="269482"/>
    <lineage>
        <taxon>Bacteria</taxon>
        <taxon>Pseudomonadati</taxon>
        <taxon>Pseudomonadota</taxon>
        <taxon>Betaproteobacteria</taxon>
        <taxon>Burkholderiales</taxon>
        <taxon>Burkholderiaceae</taxon>
        <taxon>Burkholderia</taxon>
        <taxon>Burkholderia cepacia complex</taxon>
    </lineage>
</organism>
<comment type="function">
    <text evidence="1">Involved in transcription antitermination. Required for transcription of ribosomal RNA (rRNA) genes. Binds specifically to the boxA antiterminator sequence of the ribosomal RNA (rrn) operons.</text>
</comment>
<comment type="similarity">
    <text evidence="1">Belongs to the NusB family.</text>
</comment>
<proteinExistence type="inferred from homology"/>
<protein>
    <recommendedName>
        <fullName evidence="1">Transcription antitermination protein NusB</fullName>
    </recommendedName>
    <alternativeName>
        <fullName evidence="1">Antitermination factor NusB</fullName>
    </alternativeName>
</protein>
<keyword id="KW-0694">RNA-binding</keyword>
<keyword id="KW-0804">Transcription</keyword>
<keyword id="KW-0889">Transcription antitermination</keyword>
<keyword id="KW-0805">Transcription regulation</keyword>
<reference key="1">
    <citation type="submission" date="2007-03" db="EMBL/GenBank/DDBJ databases">
        <title>Complete sequence of chromosome 1 of Burkholderia vietnamiensis G4.</title>
        <authorList>
            <consortium name="US DOE Joint Genome Institute"/>
            <person name="Copeland A."/>
            <person name="Lucas S."/>
            <person name="Lapidus A."/>
            <person name="Barry K."/>
            <person name="Detter J.C."/>
            <person name="Glavina del Rio T."/>
            <person name="Hammon N."/>
            <person name="Israni S."/>
            <person name="Dalin E."/>
            <person name="Tice H."/>
            <person name="Pitluck S."/>
            <person name="Chain P."/>
            <person name="Malfatti S."/>
            <person name="Shin M."/>
            <person name="Vergez L."/>
            <person name="Schmutz J."/>
            <person name="Larimer F."/>
            <person name="Land M."/>
            <person name="Hauser L."/>
            <person name="Kyrpides N."/>
            <person name="Tiedje J."/>
            <person name="Richardson P."/>
        </authorList>
    </citation>
    <scope>NUCLEOTIDE SEQUENCE [LARGE SCALE GENOMIC DNA]</scope>
    <source>
        <strain>G4 / LMG 22486</strain>
    </source>
</reference>
<feature type="chain" id="PRO_1000023718" description="Transcription antitermination protein NusB">
    <location>
        <begin position="1"/>
        <end position="145"/>
    </location>
</feature>